<reference key="1">
    <citation type="journal article" date="1998" name="Science">
        <title>Genome sequence of the nematode C. elegans: a platform for investigating biology.</title>
        <authorList>
            <consortium name="The C. elegans sequencing consortium"/>
        </authorList>
    </citation>
    <scope>NUCLEOTIDE SEQUENCE [LARGE SCALE GENOMIC DNA]</scope>
    <source>
        <strain>Bristol N2</strain>
    </source>
</reference>
<dbReference type="EMBL" id="Z46996">
    <property type="protein sequence ID" value="CAA87101.1"/>
    <property type="molecule type" value="Genomic_DNA"/>
</dbReference>
<dbReference type="PIR" id="T19702">
    <property type="entry name" value="T19702"/>
</dbReference>
<dbReference type="RefSeq" id="NP_497713.1">
    <property type="nucleotide sequence ID" value="NM_065312.7"/>
</dbReference>
<dbReference type="SMR" id="Q18421"/>
<dbReference type="BioGRID" id="40691">
    <property type="interactions" value="34"/>
</dbReference>
<dbReference type="DIP" id="DIP-26028N"/>
<dbReference type="FunCoup" id="Q18421">
    <property type="interactions" value="2660"/>
</dbReference>
<dbReference type="STRING" id="6239.C34C12.8.1"/>
<dbReference type="PaxDb" id="6239-C34C12.8"/>
<dbReference type="PeptideAtlas" id="Q18421"/>
<dbReference type="EnsemblMetazoa" id="C34C12.8.1">
    <property type="protein sequence ID" value="C34C12.8.1"/>
    <property type="gene ID" value="WBGene00007927"/>
</dbReference>
<dbReference type="GeneID" id="175449"/>
<dbReference type="KEGG" id="cel:CELE_C34C12.8"/>
<dbReference type="UCSC" id="C34C12.8">
    <property type="organism name" value="c. elegans"/>
</dbReference>
<dbReference type="AGR" id="WB:WBGene00007927"/>
<dbReference type="CTD" id="175449"/>
<dbReference type="WormBase" id="C34C12.8">
    <property type="protein sequence ID" value="CE03057"/>
    <property type="gene ID" value="WBGene00007927"/>
</dbReference>
<dbReference type="eggNOG" id="KOG3003">
    <property type="taxonomic scope" value="Eukaryota"/>
</dbReference>
<dbReference type="GeneTree" id="ENSGT00390000005589"/>
<dbReference type="HOGENOM" id="CLU_057217_0_1_1"/>
<dbReference type="InParanoid" id="Q18421"/>
<dbReference type="OMA" id="PVGHIEV"/>
<dbReference type="OrthoDB" id="201635at2759"/>
<dbReference type="PhylomeDB" id="Q18421"/>
<dbReference type="PRO" id="PR:Q18421"/>
<dbReference type="Proteomes" id="UP000001940">
    <property type="component" value="Chromosome III"/>
</dbReference>
<dbReference type="Bgee" id="WBGene00007927">
    <property type="expression patterns" value="Expressed in germ line (C elegans) and 4 other cell types or tissues"/>
</dbReference>
<dbReference type="GO" id="GO:0005739">
    <property type="term" value="C:mitochondrion"/>
    <property type="evidence" value="ECO:0007005"/>
    <property type="project" value="WormBase"/>
</dbReference>
<dbReference type="GO" id="GO:0001405">
    <property type="term" value="C:PAM complex, Tim23 associated import motor"/>
    <property type="evidence" value="ECO:0000318"/>
    <property type="project" value="GO_Central"/>
</dbReference>
<dbReference type="GO" id="GO:0000774">
    <property type="term" value="F:adenyl-nucleotide exchange factor activity"/>
    <property type="evidence" value="ECO:0000318"/>
    <property type="project" value="GO_Central"/>
</dbReference>
<dbReference type="GO" id="GO:0042803">
    <property type="term" value="F:protein homodimerization activity"/>
    <property type="evidence" value="ECO:0007669"/>
    <property type="project" value="InterPro"/>
</dbReference>
<dbReference type="GO" id="GO:0051087">
    <property type="term" value="F:protein-folding chaperone binding"/>
    <property type="evidence" value="ECO:0007669"/>
    <property type="project" value="InterPro"/>
</dbReference>
<dbReference type="GO" id="GO:0051082">
    <property type="term" value="F:unfolded protein binding"/>
    <property type="evidence" value="ECO:0000318"/>
    <property type="project" value="GO_Central"/>
</dbReference>
<dbReference type="GO" id="GO:0006457">
    <property type="term" value="P:protein folding"/>
    <property type="evidence" value="ECO:0007669"/>
    <property type="project" value="InterPro"/>
</dbReference>
<dbReference type="GO" id="GO:0030150">
    <property type="term" value="P:protein import into mitochondrial matrix"/>
    <property type="evidence" value="ECO:0000318"/>
    <property type="project" value="GO_Central"/>
</dbReference>
<dbReference type="CDD" id="cd00446">
    <property type="entry name" value="GrpE"/>
    <property type="match status" value="1"/>
</dbReference>
<dbReference type="Gene3D" id="3.90.20.20">
    <property type="match status" value="1"/>
</dbReference>
<dbReference type="Gene3D" id="2.30.22.10">
    <property type="entry name" value="Head domain of nucleotide exchange factor GrpE"/>
    <property type="match status" value="1"/>
</dbReference>
<dbReference type="HAMAP" id="MF_01151">
    <property type="entry name" value="GrpE"/>
    <property type="match status" value="1"/>
</dbReference>
<dbReference type="InterPro" id="IPR000740">
    <property type="entry name" value="GrpE"/>
</dbReference>
<dbReference type="InterPro" id="IPR013805">
    <property type="entry name" value="GrpE_coiled_coil"/>
</dbReference>
<dbReference type="InterPro" id="IPR009012">
    <property type="entry name" value="GrpE_head"/>
</dbReference>
<dbReference type="PANTHER" id="PTHR21237">
    <property type="entry name" value="GRPE PROTEIN"/>
    <property type="match status" value="1"/>
</dbReference>
<dbReference type="PANTHER" id="PTHR21237:SF23">
    <property type="entry name" value="GRPE PROTEIN HOMOLOG, MITOCHONDRIAL"/>
    <property type="match status" value="1"/>
</dbReference>
<dbReference type="Pfam" id="PF01025">
    <property type="entry name" value="GrpE"/>
    <property type="match status" value="1"/>
</dbReference>
<dbReference type="PRINTS" id="PR00773">
    <property type="entry name" value="GRPEPROTEIN"/>
</dbReference>
<dbReference type="SUPFAM" id="SSF58014">
    <property type="entry name" value="Coiled-coil domain of nucleotide exchange factor GrpE"/>
    <property type="match status" value="1"/>
</dbReference>
<dbReference type="SUPFAM" id="SSF51064">
    <property type="entry name" value="Head domain of nucleotide exchange factor GrpE"/>
    <property type="match status" value="1"/>
</dbReference>
<dbReference type="PROSITE" id="PS01071">
    <property type="entry name" value="GRPE"/>
    <property type="match status" value="1"/>
</dbReference>
<keyword id="KW-0143">Chaperone</keyword>
<keyword id="KW-0496">Mitochondrion</keyword>
<keyword id="KW-1185">Reference proteome</keyword>
<keyword id="KW-0809">Transit peptide</keyword>
<proteinExistence type="inferred from homology"/>
<evidence type="ECO:0000250" key="1"/>
<evidence type="ECO:0000255" key="2"/>
<evidence type="ECO:0000305" key="3"/>
<comment type="function">
    <text evidence="1">Essential component of the PAM complex, a complex required for the translocation of transit peptide-containing proteins from the inner membrane into the mitochondrial matrix in an ATP-dependent manner. Seems to control the nucleotide-dependent binding of mitochondrial HSP70 to substrate proteins (By similarity).</text>
</comment>
<comment type="subunit">
    <text evidence="1">Probable component of the PAM complex at least composed of a mitochondrial HSP70 protein, GrpE, tim-44, tim-16 and tim-14/dnj-21.</text>
</comment>
<comment type="subcellular location">
    <subcellularLocation>
        <location evidence="1">Mitochondrion matrix</location>
    </subcellularLocation>
</comment>
<comment type="similarity">
    <text evidence="3">Belongs to the GrpE family.</text>
</comment>
<feature type="transit peptide" description="Mitochondrion" evidence="2">
    <location>
        <begin position="1"/>
        <end status="unknown"/>
    </location>
</feature>
<feature type="chain" id="PRO_0000013047" description="GrpE protein homolog, mitochondrial">
    <location>
        <begin status="unknown"/>
        <end position="237"/>
    </location>
</feature>
<name>GRPE_CAEEL</name>
<accession>Q18421</accession>
<organism>
    <name type="scientific">Caenorhabditis elegans</name>
    <dbReference type="NCBI Taxonomy" id="6239"/>
    <lineage>
        <taxon>Eukaryota</taxon>
        <taxon>Metazoa</taxon>
        <taxon>Ecdysozoa</taxon>
        <taxon>Nematoda</taxon>
        <taxon>Chromadorea</taxon>
        <taxon>Rhabditida</taxon>
        <taxon>Rhabditina</taxon>
        <taxon>Rhabditomorpha</taxon>
        <taxon>Rhabditoidea</taxon>
        <taxon>Rhabditidae</taxon>
        <taxon>Peloderinae</taxon>
        <taxon>Caenorhabditis</taxon>
    </lineage>
</organism>
<protein>
    <recommendedName>
        <fullName>GrpE protein homolog, mitochondrial</fullName>
    </recommendedName>
</protein>
<sequence length="237" mass="26448">MLRKGVSFVGQAVQQTLKTQKNLRIQRFSATASQSSEEVNYEIRKDGKRLRGADYEEIVLTSIAGEDKTQIPKGAFDVLLKEYDDLQAESLDFKDKYQRSLAETENVRRRGIKQTDDAKVFAIQSFCKDLLEVSDILDIAVKSVKPEDLESGGKALKDLFEGVSMTRTVMAKTFAKHGLVTVDPTNEKFDPNLHEAVFQIPSANAKQPVGHIEVCTKIGYSLKERPIRPAQVGVVSK</sequence>
<gene>
    <name type="ORF">C34C12.8</name>
</gene>